<name>DGAT1_BOVIN</name>
<protein>
    <recommendedName>
        <fullName evidence="8">Diacylglycerol O-acyltransferase 1</fullName>
        <ecNumber evidence="7">2.3.1.20</ecNumber>
    </recommendedName>
    <alternativeName>
        <fullName>Acyl-CoA retinol O-fatty-acyltransferase</fullName>
        <shortName>ARAT</shortName>
        <shortName>Retinol O-fatty-acyltransferase</shortName>
        <ecNumber evidence="1">2.3.1.76</ecNumber>
    </alternativeName>
    <alternativeName>
        <fullName>Diglyceride acyltransferase</fullName>
    </alternativeName>
</protein>
<organism>
    <name type="scientific">Bos taurus</name>
    <name type="common">Bovine</name>
    <dbReference type="NCBI Taxonomy" id="9913"/>
    <lineage>
        <taxon>Eukaryota</taxon>
        <taxon>Metazoa</taxon>
        <taxon>Chordata</taxon>
        <taxon>Craniata</taxon>
        <taxon>Vertebrata</taxon>
        <taxon>Euteleostomi</taxon>
        <taxon>Mammalia</taxon>
        <taxon>Eutheria</taxon>
        <taxon>Laurasiatheria</taxon>
        <taxon>Artiodactyla</taxon>
        <taxon>Ruminantia</taxon>
        <taxon>Pecora</taxon>
        <taxon>Bovidae</taxon>
        <taxon>Bovinae</taxon>
        <taxon>Bos</taxon>
    </lineage>
</organism>
<dbReference type="EC" id="2.3.1.20" evidence="7"/>
<dbReference type="EC" id="2.3.1.76" evidence="1"/>
<dbReference type="EMBL" id="AY065621">
    <property type="protein sequence ID" value="AAL49962.1"/>
    <property type="molecule type" value="Genomic_DNA"/>
</dbReference>
<dbReference type="EMBL" id="AJ318490">
    <property type="protein sequence ID" value="CAC86391.1"/>
    <property type="molecule type" value="Genomic_DNA"/>
</dbReference>
<dbReference type="EMBL" id="BC118146">
    <property type="protein sequence ID" value="AAI18147.1"/>
    <property type="molecule type" value="mRNA"/>
</dbReference>
<dbReference type="RefSeq" id="NP_777118.2">
    <property type="nucleotide sequence ID" value="NM_174693.2"/>
</dbReference>
<dbReference type="SMR" id="Q8MK44"/>
<dbReference type="FunCoup" id="Q8MK44">
    <property type="interactions" value="826"/>
</dbReference>
<dbReference type="STRING" id="9913.ENSBTAP00000037256"/>
<dbReference type="ChEMBL" id="CHEMBL4523395"/>
<dbReference type="PaxDb" id="9913-ENSBTAP00000037256"/>
<dbReference type="GeneID" id="282609"/>
<dbReference type="KEGG" id="bta:282609"/>
<dbReference type="CTD" id="8694"/>
<dbReference type="eggNOG" id="KOG0380">
    <property type="taxonomic scope" value="Eukaryota"/>
</dbReference>
<dbReference type="InParanoid" id="Q8MK44"/>
<dbReference type="OrthoDB" id="10039049at2759"/>
<dbReference type="BRENDA" id="2.3.1.20">
    <property type="organism ID" value="908"/>
</dbReference>
<dbReference type="UniPathway" id="UPA00230"/>
<dbReference type="Proteomes" id="UP000009136">
    <property type="component" value="Unplaced"/>
</dbReference>
<dbReference type="GO" id="GO:0005789">
    <property type="term" value="C:endoplasmic reticulum membrane"/>
    <property type="evidence" value="ECO:0000318"/>
    <property type="project" value="GO_Central"/>
</dbReference>
<dbReference type="GO" id="GO:0016020">
    <property type="term" value="C:membrane"/>
    <property type="evidence" value="ECO:0000250"/>
    <property type="project" value="UniProtKB"/>
</dbReference>
<dbReference type="GO" id="GO:0004144">
    <property type="term" value="F:diacylglycerol O-acyltransferase activity"/>
    <property type="evidence" value="ECO:0000314"/>
    <property type="project" value="AgBase"/>
</dbReference>
<dbReference type="GO" id="GO:0050252">
    <property type="term" value="F:retinol O-fatty-acyltransferase activity"/>
    <property type="evidence" value="ECO:0007669"/>
    <property type="project" value="UniProtKB-EC"/>
</dbReference>
<dbReference type="GO" id="GO:0046339">
    <property type="term" value="P:diacylglycerol metabolic process"/>
    <property type="evidence" value="ECO:0000250"/>
    <property type="project" value="UniProtKB"/>
</dbReference>
<dbReference type="GO" id="GO:0006640">
    <property type="term" value="P:monoacylglycerol biosynthetic process"/>
    <property type="evidence" value="ECO:0000250"/>
    <property type="project" value="UniProtKB"/>
</dbReference>
<dbReference type="GO" id="GO:0019432">
    <property type="term" value="P:triglyceride biosynthetic process"/>
    <property type="evidence" value="ECO:0000250"/>
    <property type="project" value="UniProtKB"/>
</dbReference>
<dbReference type="InterPro" id="IPR027251">
    <property type="entry name" value="Diacylglycerol_acylTrfase1"/>
</dbReference>
<dbReference type="InterPro" id="IPR004299">
    <property type="entry name" value="MBOAT_fam"/>
</dbReference>
<dbReference type="InterPro" id="IPR014371">
    <property type="entry name" value="Oat_ACAT_DAG_ARE"/>
</dbReference>
<dbReference type="PANTHER" id="PTHR10408:SF7">
    <property type="entry name" value="DIACYLGLYCEROL O-ACYLTRANSFERASE 1"/>
    <property type="match status" value="1"/>
</dbReference>
<dbReference type="PANTHER" id="PTHR10408">
    <property type="entry name" value="STEROL O-ACYLTRANSFERASE"/>
    <property type="match status" value="1"/>
</dbReference>
<dbReference type="Pfam" id="PF03062">
    <property type="entry name" value="MBOAT"/>
    <property type="match status" value="1"/>
</dbReference>
<dbReference type="PIRSF" id="PIRSF000439">
    <property type="entry name" value="Oat_ACAT_DAG_ARE"/>
    <property type="match status" value="1"/>
</dbReference>
<dbReference type="PIRSF" id="PIRSF500231">
    <property type="entry name" value="Oat_dag"/>
    <property type="match status" value="1"/>
</dbReference>
<comment type="function">
    <text evidence="1 2 6 7">Catalyzes the terminal and only committed step in triacylglycerol synthesis by using diacylglycerol and fatty acyl CoA as substrates (PubMed:18704537). Highly expressed in epithelial cells of the small intestine and its activity is essential for the absorption of dietary fats. In liver, plays a role in esterifying exogenous fatty acids to glycerol, and is required to synthesize fat for storage (By similarity). Also present in female mammary glands, where it produces fat in the milk (PubMed:15342525, PubMed:18704537). May be involved in VLDL (very low density lipoprotein) assembly (By similarity). In contrast to DGAT2 it is not essential for survival (By similarity). Functions as the major acyl-CoA retinol acyltransferase (ARAT) in the skin, where it acts to maintain retinoid homeostasis and prevent retinoid toxicity leading to skin and hair disorders (By similarity). Exhibits additional acyltransferase activities, includin acyl CoA:monoacylglycerol acyltransferase (MGAT), wax monoester and wax diester synthases (By similarity). Also able to use 1-monoalkylglycerol (1-MAkG) as an acyl acceptor for the synthesis of monoalkyl-monoacylglycerol (MAMAG) (By similarity).</text>
</comment>
<comment type="catalytic activity">
    <reaction evidence="7">
        <text>an acyl-CoA + a 1,2-diacyl-sn-glycerol = a triacyl-sn-glycerol + CoA</text>
        <dbReference type="Rhea" id="RHEA:10868"/>
        <dbReference type="ChEBI" id="CHEBI:17815"/>
        <dbReference type="ChEBI" id="CHEBI:57287"/>
        <dbReference type="ChEBI" id="CHEBI:58342"/>
        <dbReference type="ChEBI" id="CHEBI:64615"/>
        <dbReference type="EC" id="2.3.1.20"/>
    </reaction>
    <physiologicalReaction direction="left-to-right" evidence="7">
        <dbReference type="Rhea" id="RHEA:10869"/>
    </physiologicalReaction>
</comment>
<comment type="catalytic activity">
    <reaction evidence="1">
        <text>all-trans-retinol + an acyl-CoA = an all-trans-retinyl ester + CoA</text>
        <dbReference type="Rhea" id="RHEA:11488"/>
        <dbReference type="ChEBI" id="CHEBI:17336"/>
        <dbReference type="ChEBI" id="CHEBI:57287"/>
        <dbReference type="ChEBI" id="CHEBI:58342"/>
        <dbReference type="ChEBI" id="CHEBI:63410"/>
        <dbReference type="EC" id="2.3.1.76"/>
    </reaction>
    <physiologicalReaction direction="left-to-right" evidence="1">
        <dbReference type="Rhea" id="RHEA:11489"/>
    </physiologicalReaction>
</comment>
<comment type="catalytic activity">
    <reaction evidence="1">
        <text>2-(9Z-octadecenoyl)-glycerol + (9Z)-octadecenoyl-CoA = 1,2-di-(9Z-octadecenoyl)-sn-glycerol + CoA</text>
        <dbReference type="Rhea" id="RHEA:37911"/>
        <dbReference type="ChEBI" id="CHEBI:52333"/>
        <dbReference type="ChEBI" id="CHEBI:57287"/>
        <dbReference type="ChEBI" id="CHEBI:57387"/>
        <dbReference type="ChEBI" id="CHEBI:73990"/>
    </reaction>
    <physiologicalReaction direction="left-to-right" evidence="1">
        <dbReference type="Rhea" id="RHEA:37912"/>
    </physiologicalReaction>
</comment>
<comment type="catalytic activity">
    <reaction evidence="1">
        <text>1,2-di-(9Z-octadecenoyl)-sn-glycerol + (9Z)-octadecenoyl-CoA = 1,2,3-tri-(9Z-octadecenoyl)-glycerol + CoA</text>
        <dbReference type="Rhea" id="RHEA:38219"/>
        <dbReference type="ChEBI" id="CHEBI:52333"/>
        <dbReference type="ChEBI" id="CHEBI:53753"/>
        <dbReference type="ChEBI" id="CHEBI:57287"/>
        <dbReference type="ChEBI" id="CHEBI:57387"/>
    </reaction>
    <physiologicalReaction direction="left-to-right" evidence="1">
        <dbReference type="Rhea" id="RHEA:38220"/>
    </physiologicalReaction>
</comment>
<comment type="catalytic activity">
    <reaction evidence="1">
        <text>all-trans-retinol + hexadecanoyl-CoA = all-trans-retinyl hexadecanoate + CoA</text>
        <dbReference type="Rhea" id="RHEA:38175"/>
        <dbReference type="ChEBI" id="CHEBI:17336"/>
        <dbReference type="ChEBI" id="CHEBI:17616"/>
        <dbReference type="ChEBI" id="CHEBI:57287"/>
        <dbReference type="ChEBI" id="CHEBI:57379"/>
    </reaction>
    <physiologicalReaction direction="left-to-right" evidence="1">
        <dbReference type="Rhea" id="RHEA:38176"/>
    </physiologicalReaction>
</comment>
<comment type="catalytic activity">
    <reaction evidence="1">
        <text>1-O-(9Z-octadecenyl)-glycerol + (9Z)-octadecenoyl-CoA = 1-O-(9Z-octadecyl)-3-(9Z-octadecenoyl)-glycerol + CoA</text>
        <dbReference type="Rhea" id="RHEA:55340"/>
        <dbReference type="ChEBI" id="CHEBI:34116"/>
        <dbReference type="ChEBI" id="CHEBI:57287"/>
        <dbReference type="ChEBI" id="CHEBI:57387"/>
        <dbReference type="ChEBI" id="CHEBI:197429"/>
    </reaction>
    <physiologicalReaction direction="left-to-right" evidence="1">
        <dbReference type="Rhea" id="RHEA:55341"/>
    </physiologicalReaction>
</comment>
<comment type="catalytic activity">
    <reaction evidence="1">
        <text>1-O-(9Z-octadecyl)-3-(9Z-octadecenoyl)-glycerol + (9Z)-octadecenoyl-CoA = 1-O-(9Z-octadecenyl)-2,3-di-(9Z-octadecenoyl)glycerol + CoA</text>
        <dbReference type="Rhea" id="RHEA:55344"/>
        <dbReference type="ChEBI" id="CHEBI:57287"/>
        <dbReference type="ChEBI" id="CHEBI:57387"/>
        <dbReference type="ChEBI" id="CHEBI:138735"/>
        <dbReference type="ChEBI" id="CHEBI:197429"/>
    </reaction>
    <physiologicalReaction direction="left-to-right" evidence="1">
        <dbReference type="Rhea" id="RHEA:55345"/>
    </physiologicalReaction>
</comment>
<comment type="catalytic activity">
    <reaction evidence="1">
        <text>1-(9Z-octadecenoyl)-glycerol + (9Z)-octadecenoyl-CoA = 1,2-di-(9Z-octadecenoyl)-glycerol + CoA</text>
        <dbReference type="Rhea" id="RHEA:37915"/>
        <dbReference type="ChEBI" id="CHEBI:52323"/>
        <dbReference type="ChEBI" id="CHEBI:57287"/>
        <dbReference type="ChEBI" id="CHEBI:57387"/>
        <dbReference type="ChEBI" id="CHEBI:75342"/>
    </reaction>
    <physiologicalReaction direction="left-to-right" evidence="1">
        <dbReference type="Rhea" id="RHEA:37916"/>
    </physiologicalReaction>
</comment>
<comment type="catalytic activity">
    <reaction evidence="1">
        <text>1,2-di-(9Z-octadecenoyl)-glycerol + (9Z)-octadecenoate + H(+) = 1,2,3-tri-(9Z-octadecenoyl)-glycerol + H2O</text>
        <dbReference type="Rhea" id="RHEA:38379"/>
        <dbReference type="ChEBI" id="CHEBI:15377"/>
        <dbReference type="ChEBI" id="CHEBI:15378"/>
        <dbReference type="ChEBI" id="CHEBI:30823"/>
        <dbReference type="ChEBI" id="CHEBI:52323"/>
        <dbReference type="ChEBI" id="CHEBI:53753"/>
    </reaction>
    <physiologicalReaction direction="left-to-right" evidence="1">
        <dbReference type="Rhea" id="RHEA:38380"/>
    </physiologicalReaction>
</comment>
<comment type="catalytic activity">
    <reaction evidence="2">
        <text>1-octadecanoyl-2-(5Z,8Z,11Z,14Z-eicosatetraenoyl)-sn-glycerol + (9Z)-octadecenoyl-CoA = 1-octadecanoyl-2-(5Z,8Z,11Z,14Z)-eicosatetraenoyl-3-(9Z)-octadecenoyl-sn-glycerol + CoA</text>
        <dbReference type="Rhea" id="RHEA:38307"/>
        <dbReference type="ChEBI" id="CHEBI:57287"/>
        <dbReference type="ChEBI" id="CHEBI:57387"/>
        <dbReference type="ChEBI" id="CHEBI:75728"/>
        <dbReference type="ChEBI" id="CHEBI:75729"/>
    </reaction>
    <physiologicalReaction direction="left-to-right" evidence="2">
        <dbReference type="Rhea" id="RHEA:38308"/>
    </physiologicalReaction>
</comment>
<comment type="catalytic activity">
    <reaction evidence="2">
        <text>hexadecane-1,2-diol + 2 hexadecanoyl-CoA = 1,2-O,O-dihexadecanoyl-1,2-hexadecanediol + 2 CoA</text>
        <dbReference type="Rhea" id="RHEA:38211"/>
        <dbReference type="ChEBI" id="CHEBI:57287"/>
        <dbReference type="ChEBI" id="CHEBI:57379"/>
        <dbReference type="ChEBI" id="CHEBI:75586"/>
        <dbReference type="ChEBI" id="CHEBI:75608"/>
    </reaction>
    <physiologicalReaction direction="left-to-right" evidence="2">
        <dbReference type="Rhea" id="RHEA:38212"/>
    </physiologicalReaction>
</comment>
<comment type="catalytic activity">
    <reaction evidence="2">
        <text>hexadecane-1,2-diol + hexadecanoyl-CoA = 2-hydroxyhexadecyl hexadecanoate + CoA</text>
        <dbReference type="Rhea" id="RHEA:38171"/>
        <dbReference type="ChEBI" id="CHEBI:57287"/>
        <dbReference type="ChEBI" id="CHEBI:57379"/>
        <dbReference type="ChEBI" id="CHEBI:75586"/>
        <dbReference type="ChEBI" id="CHEBI:75587"/>
    </reaction>
    <physiologicalReaction direction="left-to-right" evidence="2">
        <dbReference type="Rhea" id="RHEA:38172"/>
    </physiologicalReaction>
</comment>
<comment type="catalytic activity">
    <reaction evidence="2">
        <text>2-(9Z-octadecenoyl)-glycerol + hexadecanoyl-CoA = 1-hexadecanoyl-2-(9Z-octadecenoyl)-sn-glycerol + CoA</text>
        <dbReference type="Rhea" id="RHEA:38071"/>
        <dbReference type="ChEBI" id="CHEBI:57287"/>
        <dbReference type="ChEBI" id="CHEBI:57379"/>
        <dbReference type="ChEBI" id="CHEBI:73990"/>
        <dbReference type="ChEBI" id="CHEBI:75466"/>
    </reaction>
    <physiologicalReaction direction="left-to-right" evidence="2">
        <dbReference type="Rhea" id="RHEA:38072"/>
    </physiologicalReaction>
</comment>
<comment type="catalytic activity">
    <reaction evidence="2">
        <text>1,2-di-(9Z-octadecenoyl)-sn-glycerol + hexadecanoyl-CoA = 1,2-di-(9Z)-octadecenoyl-3-hexadecanoyl-sn-glycerol + CoA</text>
        <dbReference type="Rhea" id="RHEA:38163"/>
        <dbReference type="ChEBI" id="CHEBI:52333"/>
        <dbReference type="ChEBI" id="CHEBI:57287"/>
        <dbReference type="ChEBI" id="CHEBI:57379"/>
        <dbReference type="ChEBI" id="CHEBI:75583"/>
    </reaction>
    <physiologicalReaction direction="left-to-right" evidence="2">
        <dbReference type="Rhea" id="RHEA:38164"/>
    </physiologicalReaction>
</comment>
<comment type="catalytic activity">
    <reaction evidence="2">
        <text>hexadecan-1-ol + hexadecanoyl-CoA = hexadecanyl hexadecanoate + CoA</text>
        <dbReference type="Rhea" id="RHEA:38167"/>
        <dbReference type="ChEBI" id="CHEBI:16125"/>
        <dbReference type="ChEBI" id="CHEBI:57287"/>
        <dbReference type="ChEBI" id="CHEBI:57379"/>
        <dbReference type="ChEBI" id="CHEBI:75584"/>
    </reaction>
    <physiologicalReaction direction="left-to-right" evidence="2">
        <dbReference type="Rhea" id="RHEA:38168"/>
    </physiologicalReaction>
</comment>
<comment type="catalytic activity">
    <reaction evidence="2">
        <text>13-cis-retinol + hexadecanoyl-CoA = 13-cis-retinyl hexadecanoate + CoA</text>
        <dbReference type="Rhea" id="RHEA:55296"/>
        <dbReference type="ChEBI" id="CHEBI:45479"/>
        <dbReference type="ChEBI" id="CHEBI:57287"/>
        <dbReference type="ChEBI" id="CHEBI:57379"/>
        <dbReference type="ChEBI" id="CHEBI:138722"/>
    </reaction>
    <physiologicalReaction direction="left-to-right" evidence="2">
        <dbReference type="Rhea" id="RHEA:55297"/>
    </physiologicalReaction>
</comment>
<comment type="catalytic activity">
    <reaction evidence="2">
        <text>1,3-di-(9Z-octadecenoyl)-glycerol + (9Z)-octadecenoyl-CoA = 1,2,3-tri-(9Z-octadecenoyl)-glycerol + CoA</text>
        <dbReference type="Rhea" id="RHEA:38435"/>
        <dbReference type="ChEBI" id="CHEBI:53753"/>
        <dbReference type="ChEBI" id="CHEBI:57287"/>
        <dbReference type="ChEBI" id="CHEBI:57387"/>
        <dbReference type="ChEBI" id="CHEBI:75735"/>
    </reaction>
    <physiologicalReaction direction="left-to-right" evidence="2">
        <dbReference type="Rhea" id="RHEA:38436"/>
    </physiologicalReaction>
</comment>
<comment type="catalytic activity">
    <reaction evidence="2">
        <text>2,3-di-(9Z)-octadecenoyl-sn-glycerol + (9Z)-octadecenoyl-CoA = 1,2,3-tri-(9Z-octadecenoyl)-glycerol + CoA</text>
        <dbReference type="Rhea" id="RHEA:38439"/>
        <dbReference type="ChEBI" id="CHEBI:53753"/>
        <dbReference type="ChEBI" id="CHEBI:57287"/>
        <dbReference type="ChEBI" id="CHEBI:57387"/>
        <dbReference type="ChEBI" id="CHEBI:75824"/>
    </reaction>
    <physiologicalReaction direction="left-to-right" evidence="2">
        <dbReference type="Rhea" id="RHEA:38440"/>
    </physiologicalReaction>
</comment>
<comment type="pathway">
    <text>Lipid metabolism; glycerolipid metabolism.</text>
</comment>
<comment type="subunit">
    <text evidence="1">Homodimer or homotetramer; both forms have similar enzymatic activities.</text>
</comment>
<comment type="subcellular location">
    <subcellularLocation>
        <location evidence="2">Endoplasmic reticulum membrane</location>
        <topology evidence="1">Multi-pass membrane protein</topology>
    </subcellularLocation>
</comment>
<comment type="domain">
    <text evidence="1">The disordered N-terminal region is required for the diacylglycerol O-acyltransferase activity and may regulate enzymatic function via its interaction with the MBOAT fold.</text>
</comment>
<comment type="domain">
    <text evidence="1">The MBOAT fold forms a reaction chamber in the endoplasmic reticulum membrane that encloses the active sites. The reaction chamber has a tunnel to the cytosolic side and its entrance recognizes the hydrophilic CoA motif of an acyl-CoA molecule. The chamber has separate entrances for each of the two substrates, acyl-CoA and 1,2-diacyl-sn-glycerol.</text>
</comment>
<comment type="polymorphism">
    <text evidence="4 5 6 7">Lys-232 is associated with higher milk fat content.</text>
</comment>
<comment type="similarity">
    <text evidence="8">Belongs to the membrane-bound acyltransferase family. Sterol o-acyltransferase subfamily.</text>
</comment>
<accession>Q8MK44</accession>
<accession>Q148M3</accession>
<accession>Q8SQB0</accession>
<gene>
    <name type="primary">DGAT1</name>
</gene>
<keyword id="KW-0012">Acyltransferase</keyword>
<keyword id="KW-0256">Endoplasmic reticulum</keyword>
<keyword id="KW-0443">Lipid metabolism</keyword>
<keyword id="KW-0472">Membrane</keyword>
<keyword id="KW-0597">Phosphoprotein</keyword>
<keyword id="KW-1185">Reference proteome</keyword>
<keyword id="KW-0808">Transferase</keyword>
<keyword id="KW-0812">Transmembrane</keyword>
<keyword id="KW-1133">Transmembrane helix</keyword>
<evidence type="ECO:0000250" key="1">
    <source>
        <dbReference type="UniProtKB" id="O75907"/>
    </source>
</evidence>
<evidence type="ECO:0000250" key="2">
    <source>
        <dbReference type="UniProtKB" id="Q9Z2A7"/>
    </source>
</evidence>
<evidence type="ECO:0000256" key="3">
    <source>
        <dbReference type="SAM" id="MobiDB-lite"/>
    </source>
</evidence>
<evidence type="ECO:0000269" key="4">
    <source>
    </source>
</evidence>
<evidence type="ECO:0000269" key="5">
    <source>
    </source>
</evidence>
<evidence type="ECO:0000269" key="6">
    <source>
    </source>
</evidence>
<evidence type="ECO:0000269" key="7">
    <source>
    </source>
</evidence>
<evidence type="ECO:0000305" key="8"/>
<sequence length="489" mass="55602">MGDRGGAGGSRRRRTGSRPSIQGGSGPAAAEEEVRDVGAGGDAPVRDTDKDGDVDVGSGHWDLRCHRLQDSLFSSDSGFSNYRGILNWCVVMLILSNARLFLENLIKYGILVDPIQVVSLFLKDPYSWPALCLVIVANIFAVAAFQVEKRLAVGALTEQAGLLLHGVNLATILCFPAAVAFLLESITPVGSVLALMVYTILFLKLFSYRDVNLWCRERRAGAKAKAALAGKKANGGAAQRTVSYPDNLTYRDLYYFLFAPTLCYELNFPRSPRIRKRFLLRRLLEMLFLTQLQVGLIQQWMVPAIQNSMKPFKDMDYSRIVERLLKLAVPNHLIWLIFFYWLFHSCLNAVAELMQFGDREFYRDWWNSESITYFWQNWNIPVHKWCIRHFYKPMLRRGSSKWAARTAVFLASAFFHEYLVSIPLRMFRLWAFTGMMAQIPLAWIVGRFFRGNYGNAAVWLSLIIGQPVAVLMYVHDYYVLNREAPAAGT</sequence>
<proteinExistence type="evidence at protein level"/>
<reference key="1">
    <citation type="journal article" date="2002" name="Genome Res.">
        <title>Positional candidate cloning of a QTL in dairy cattle: identification of a missense mutation in the bovine DGAT1 gene with major effect on milk yield and composition.</title>
        <authorList>
            <person name="Grisart B."/>
            <person name="Coppieters W."/>
            <person name="Farnir F."/>
            <person name="Karim L."/>
            <person name="Ford C."/>
            <person name="Berzi P."/>
            <person name="Cambisano N."/>
            <person name="Mni M."/>
            <person name="Reid S."/>
            <person name="Simon P."/>
            <person name="Spelman R."/>
            <person name="Georges M."/>
            <person name="Snell R."/>
        </authorList>
    </citation>
    <scope>NUCLEOTIDE SEQUENCE [GENOMIC DNA]</scope>
    <scope>POLYMORPHISM</scope>
    <scope>VARIANT ALA-232</scope>
</reference>
<reference key="2">
    <citation type="journal article" date="2002" name="Proc. Natl. Acad. Sci. U.S.A.">
        <title>Association of a lysine-232/alanine polymorphism in a bovine gene encoding acyl-CoA:diacylglycerol acyltransferase (DGAT1) with variation at a quantitative trait locus for milk fat content.</title>
        <authorList>
            <person name="Winter A."/>
            <person name="Kramer W."/>
            <person name="Werner F.A.O."/>
            <person name="Kollers S."/>
            <person name="Kata S."/>
            <person name="Durstewitz G."/>
            <person name="Buitkamp J."/>
            <person name="Womack J.E."/>
            <person name="Thaller G."/>
            <person name="Fries R."/>
        </authorList>
    </citation>
    <scope>NUCLEOTIDE SEQUENCE [GENOMIC DNA]</scope>
    <scope>POLYMORPHISM</scope>
    <scope>VARIANT ALA-232</scope>
</reference>
<reference key="3">
    <citation type="submission" date="2006-06" db="EMBL/GenBank/DDBJ databases">
        <authorList>
            <consortium name="NIH - Mammalian Gene Collection (MGC) project"/>
        </authorList>
    </citation>
    <scope>NUCLEOTIDE SEQUENCE [LARGE SCALE MRNA]</scope>
    <source>
        <strain>Hereford</strain>
        <tissue>Ascending colon</tissue>
    </source>
</reference>
<reference key="4">
    <citation type="journal article" date="2008" name="Lipids">
        <title>Effect of CLA and other C18 unsaturated fatty acids on DGAT in bovine milk fat biosynthetic systems.</title>
        <authorList>
            <person name="Soerensen B.M."/>
            <person name="Chris Kazala E."/>
            <person name="Murdoch G.K."/>
            <person name="Keating A.F."/>
            <person name="Cruz-Hernandez C."/>
            <person name="Wegner J."/>
            <person name="Kennelly J.J."/>
            <person name="Okine E.K."/>
            <person name="Weselake R.J."/>
        </authorList>
    </citation>
    <scope>FUNCTION</scope>
    <scope>CATALYTIC ACTIVITY</scope>
    <scope>POLYMORPHISM</scope>
    <scope>VARIANT ALA-232</scope>
</reference>
<reference key="5">
    <citation type="journal article" date="2004" name="Genetics">
        <title>Evidence for multiple alleles at the DGAT1 locus better explains a quantitative trait locus with major effect on milk fat content in cattle.</title>
        <authorList>
            <person name="Kuehn C."/>
            <person name="Thaller G."/>
            <person name="Winter A."/>
            <person name="Bininda-Emonds O.R."/>
            <person name="Kaupe B."/>
            <person name="Erhardt G."/>
            <person name="Bennewitz J."/>
            <person name="Schwerin M."/>
            <person name="Fries R."/>
        </authorList>
    </citation>
    <scope>FUNCTION</scope>
    <scope>POLYMORPHISM</scope>
    <scope>VARIANT ALA-232</scope>
</reference>
<feature type="chain" id="PRO_0000244770" description="Diacylglycerol O-acyltransferase 1">
    <location>
        <begin position="1"/>
        <end position="489"/>
    </location>
</feature>
<feature type="topological domain" description="Cytoplasmic" evidence="8">
    <location>
        <begin position="1"/>
        <end position="80"/>
    </location>
</feature>
<feature type="transmembrane region" description="Helical; Name=1" evidence="1">
    <location>
        <begin position="81"/>
        <end position="115"/>
    </location>
</feature>
<feature type="topological domain" description="Lumenal" evidence="8">
    <location>
        <begin position="116"/>
        <end position="127"/>
    </location>
</feature>
<feature type="transmembrane region" description="Helical; Name=2" evidence="1">
    <location>
        <begin position="128"/>
        <end position="153"/>
    </location>
</feature>
<feature type="topological domain" description="Cytoplasmic" evidence="8">
    <location>
        <begin position="154"/>
        <end position="158"/>
    </location>
</feature>
<feature type="transmembrane region" description="Helical; Name=3" evidence="1">
    <location>
        <begin position="159"/>
        <end position="181"/>
    </location>
</feature>
<feature type="topological domain" description="Lumenal" evidence="8">
    <location>
        <begin position="182"/>
        <end position="188"/>
    </location>
</feature>
<feature type="transmembrane region" description="Helical; Name=4" evidence="1">
    <location>
        <begin position="189"/>
        <end position="220"/>
    </location>
</feature>
<feature type="topological domain" description="Cytoplasmic" evidence="8">
    <location>
        <begin position="221"/>
        <end position="274"/>
    </location>
</feature>
<feature type="transmembrane region" description="Helical; Name=5" evidence="1">
    <location>
        <begin position="275"/>
        <end position="309"/>
    </location>
</feature>
<feature type="topological domain" description="Lumenal" evidence="8">
    <location>
        <begin position="310"/>
        <end position="316"/>
    </location>
</feature>
<feature type="transmembrane region" description="Helical; Name=6" evidence="1">
    <location>
        <begin position="317"/>
        <end position="354"/>
    </location>
</feature>
<feature type="topological domain" description="Cytoplasmic" evidence="8">
    <location>
        <begin position="355"/>
        <end position="400"/>
    </location>
</feature>
<feature type="transmembrane region" description="Helical; Name=7" evidence="1">
    <location>
        <begin position="401"/>
        <end position="421"/>
    </location>
</feature>
<feature type="topological domain" description="Lumenal" evidence="8">
    <location>
        <begin position="422"/>
        <end position="429"/>
    </location>
</feature>
<feature type="transmembrane region" description="Helical; Name=8" evidence="1">
    <location>
        <begin position="430"/>
        <end position="448"/>
    </location>
</feature>
<feature type="topological domain" description="Cytoplasmic" evidence="8">
    <location>
        <begin position="449"/>
        <end position="450"/>
    </location>
</feature>
<feature type="transmembrane region" description="Helical; Name=9" evidence="1">
    <location>
        <begin position="451"/>
        <end position="482"/>
    </location>
</feature>
<feature type="topological domain" description="Lumenal" evidence="8">
    <location>
        <begin position="483"/>
        <end position="489"/>
    </location>
</feature>
<feature type="region of interest" description="Involved in homomerization" evidence="2">
    <location>
        <begin position="1"/>
        <end position="88"/>
    </location>
</feature>
<feature type="region of interest" description="Disordered" evidence="1">
    <location>
        <begin position="1"/>
        <end position="54"/>
    </location>
</feature>
<feature type="region of interest" description="Extracellular loop 1 (EL1)" evidence="1">
    <location>
        <begin position="116"/>
        <end position="127"/>
    </location>
</feature>
<feature type="region of interest" description="MBOAT fold" evidence="1">
    <location>
        <begin position="128"/>
        <end position="489"/>
    </location>
</feature>
<feature type="region of interest" description="Intracellular loop 1 (IL1)" evidence="1">
    <location>
        <begin position="225"/>
        <end position="277"/>
    </location>
</feature>
<feature type="region of interest" description="Intracellular loop 2 (IL2)" evidence="1">
    <location>
        <begin position="355"/>
        <end position="400"/>
    </location>
</feature>
<feature type="region of interest" description="Amphipathic helix (AH)" evidence="1">
    <location>
        <begin position="381"/>
        <end position="395"/>
    </location>
</feature>
<feature type="short sequence motif" description="FYXDWWN motif" evidence="1">
    <location>
        <begin position="361"/>
        <end position="367"/>
    </location>
</feature>
<feature type="compositionally biased region" description="Basic and acidic residues" evidence="3">
    <location>
        <begin position="44"/>
        <end position="53"/>
    </location>
</feature>
<feature type="active site" evidence="2">
    <location>
        <position position="416"/>
    </location>
</feature>
<feature type="binding site" evidence="1">
    <location>
        <begin position="375"/>
        <end position="383"/>
    </location>
    <ligand>
        <name>an acyl-CoA</name>
        <dbReference type="ChEBI" id="CHEBI:58342"/>
    </ligand>
</feature>
<feature type="binding site" evidence="1">
    <location>
        <position position="391"/>
    </location>
    <ligand>
        <name>an acyl-CoA</name>
        <dbReference type="ChEBI" id="CHEBI:58342"/>
    </ligand>
</feature>
<feature type="binding site" evidence="1">
    <location>
        <position position="405"/>
    </location>
    <ligand>
        <name>an acyl-CoA</name>
        <dbReference type="ChEBI" id="CHEBI:58342"/>
    </ligand>
</feature>
<feature type="binding site" evidence="1">
    <location>
        <position position="478"/>
    </location>
    <ligand>
        <name>an acyl-CoA</name>
        <dbReference type="ChEBI" id="CHEBI:58342"/>
    </ligand>
</feature>
<feature type="site" description="Important for catalytic activity" evidence="1">
    <location>
        <position position="417"/>
    </location>
</feature>
<feature type="modified residue" description="Phosphoserine" evidence="1">
    <location>
        <position position="20"/>
    </location>
</feature>
<feature type="sequence variant" evidence="4 5 6 7">
    <original>K</original>
    <variation>A</variation>
    <location>
        <position position="232"/>
    </location>
</feature>
<feature type="sequence conflict" description="In Ref. 2; CAC86391." evidence="8" ref="2">
    <original>R</original>
    <variation>G</variation>
    <location>
        <position position="425"/>
    </location>
</feature>